<organism>
    <name type="scientific">Staphylococcus aureus (strain Mu3 / ATCC 700698)</name>
    <dbReference type="NCBI Taxonomy" id="418127"/>
    <lineage>
        <taxon>Bacteria</taxon>
        <taxon>Bacillati</taxon>
        <taxon>Bacillota</taxon>
        <taxon>Bacilli</taxon>
        <taxon>Bacillales</taxon>
        <taxon>Staphylococcaceae</taxon>
        <taxon>Staphylococcus</taxon>
    </lineage>
</organism>
<feature type="signal peptide" evidence="1">
    <location>
        <begin position="1"/>
        <end position="36"/>
    </location>
</feature>
<feature type="chain" id="PRO_0000359543" description="Serine protease SplB">
    <location>
        <begin position="37"/>
        <end position="240"/>
    </location>
</feature>
<feature type="active site" description="Charge relay system" evidence="2">
    <location>
        <position position="75"/>
    </location>
</feature>
<feature type="active site" description="Charge relay system" evidence="2">
    <location>
        <position position="113"/>
    </location>
</feature>
<feature type="active site" description="Charge relay system" evidence="2">
    <location>
        <position position="193"/>
    </location>
</feature>
<proteinExistence type="inferred from homology"/>
<keyword id="KW-0378">Hydrolase</keyword>
<keyword id="KW-0645">Protease</keyword>
<keyword id="KW-0964">Secreted</keyword>
<keyword id="KW-0720">Serine protease</keyword>
<keyword id="KW-0732">Signal</keyword>
<reference key="1">
    <citation type="journal article" date="2008" name="Antimicrob. Agents Chemother.">
        <title>Mutated response regulator graR is responsible for phenotypic conversion of Staphylococcus aureus from heterogeneous vancomycin-intermediate resistance to vancomycin-intermediate resistance.</title>
        <authorList>
            <person name="Neoh H.-M."/>
            <person name="Cui L."/>
            <person name="Yuzawa H."/>
            <person name="Takeuchi F."/>
            <person name="Matsuo M."/>
            <person name="Hiramatsu K."/>
        </authorList>
    </citation>
    <scope>NUCLEOTIDE SEQUENCE [LARGE SCALE GENOMIC DNA]</scope>
    <source>
        <strain>Mu3 / ATCC 700698</strain>
    </source>
</reference>
<gene>
    <name type="primary">splB</name>
    <name type="ordered locus">SAHV_1797</name>
</gene>
<evidence type="ECO:0000250" key="1"/>
<evidence type="ECO:0000250" key="2">
    <source>
        <dbReference type="UniProtKB" id="Q2FXC3"/>
    </source>
</evidence>
<evidence type="ECO:0000305" key="3"/>
<comment type="function">
    <text evidence="1">Serine protease that cleaves specifically after the sequence Trp-Glu-Leu-Gln.</text>
</comment>
<comment type="subcellular location">
    <subcellularLocation>
        <location evidence="1">Secreted</location>
    </subcellularLocation>
</comment>
<comment type="similarity">
    <text evidence="3">Belongs to the peptidase S1B family.</text>
</comment>
<protein>
    <recommendedName>
        <fullName>Serine protease SplB</fullName>
        <ecNumber>3.4.21.-</ecNumber>
    </recommendedName>
</protein>
<dbReference type="EC" id="3.4.21.-"/>
<dbReference type="EMBL" id="AP009324">
    <property type="protein sequence ID" value="BAF78680.1"/>
    <property type="molecule type" value="Genomic_DNA"/>
</dbReference>
<dbReference type="RefSeq" id="WP_001039454.1">
    <property type="nucleotide sequence ID" value="NC_009782.1"/>
</dbReference>
<dbReference type="SMR" id="A7X3Q8"/>
<dbReference type="MEROPS" id="S01.282"/>
<dbReference type="KEGG" id="saw:SAHV_1797"/>
<dbReference type="HOGENOM" id="CLU_073589_2_0_9"/>
<dbReference type="GO" id="GO:0005576">
    <property type="term" value="C:extracellular region"/>
    <property type="evidence" value="ECO:0007669"/>
    <property type="project" value="UniProtKB-SubCell"/>
</dbReference>
<dbReference type="GO" id="GO:0004252">
    <property type="term" value="F:serine-type endopeptidase activity"/>
    <property type="evidence" value="ECO:0007669"/>
    <property type="project" value="InterPro"/>
</dbReference>
<dbReference type="GO" id="GO:0006508">
    <property type="term" value="P:proteolysis"/>
    <property type="evidence" value="ECO:0007669"/>
    <property type="project" value="UniProtKB-KW"/>
</dbReference>
<dbReference type="Gene3D" id="2.40.10.10">
    <property type="entry name" value="Trypsin-like serine proteases"/>
    <property type="match status" value="2"/>
</dbReference>
<dbReference type="InterPro" id="IPR009003">
    <property type="entry name" value="Peptidase_S1_PA"/>
</dbReference>
<dbReference type="InterPro" id="IPR043504">
    <property type="entry name" value="Peptidase_S1_PA_chymotrypsin"/>
</dbReference>
<dbReference type="InterPro" id="IPR008256">
    <property type="entry name" value="Peptidase_S1B"/>
</dbReference>
<dbReference type="InterPro" id="IPR008353">
    <property type="entry name" value="Peptidase_S1B_tx"/>
</dbReference>
<dbReference type="InterPro" id="IPR001254">
    <property type="entry name" value="Trypsin_dom"/>
</dbReference>
<dbReference type="InterPro" id="IPR028301">
    <property type="entry name" value="V8_his_AS"/>
</dbReference>
<dbReference type="PANTHER" id="PTHR43019:SF23">
    <property type="entry name" value="PROTEASE DO-LIKE 5, CHLOROPLASTIC"/>
    <property type="match status" value="1"/>
</dbReference>
<dbReference type="PANTHER" id="PTHR43019">
    <property type="entry name" value="SERINE ENDOPROTEASE DEGS"/>
    <property type="match status" value="1"/>
</dbReference>
<dbReference type="Pfam" id="PF00089">
    <property type="entry name" value="Trypsin"/>
    <property type="match status" value="1"/>
</dbReference>
<dbReference type="PRINTS" id="PR01774">
    <property type="entry name" value="EXFOLTOXIN"/>
</dbReference>
<dbReference type="PRINTS" id="PR00839">
    <property type="entry name" value="V8PROTEASE"/>
</dbReference>
<dbReference type="SUPFAM" id="SSF50494">
    <property type="entry name" value="Trypsin-like serine proteases"/>
    <property type="match status" value="1"/>
</dbReference>
<dbReference type="PROSITE" id="PS00672">
    <property type="entry name" value="V8_HIS"/>
    <property type="match status" value="1"/>
</dbReference>
<sequence length="240" mass="26141">MNKNVVIKSLATLTILTSVTGIGTTLVEEVQQTAKAENNVTKIQDTNIFPYTGVVAFKSATGFVVGKNTILTNKHVSKNYKVGDRITAHPNSDKGNGGIYSIKKIINYPGKEDVSVIQVEERAIERGPKGFNFNDNVTPFKYAAGAKAGERIKVIGYPHPYKNKYVLYESTGPVMSVEGSSIVYSAHTESGNSGSPVLNSNNELVGIHFASDVKNDDNRNAYGVYFTPEIKKFIAENIDK</sequence>
<name>SPLB_STAA1</name>
<accession>A7X3Q8</accession>